<name>ROAA_MOUSE</name>
<accession>Q99020</accession>
<accession>Q8BPE0</accession>
<evidence type="ECO:0000250" key="1"/>
<evidence type="ECO:0000250" key="2">
    <source>
        <dbReference type="UniProtKB" id="Q99729"/>
    </source>
</evidence>
<evidence type="ECO:0000255" key="3">
    <source>
        <dbReference type="PROSITE-ProRule" id="PRU00176"/>
    </source>
</evidence>
<evidence type="ECO:0000256" key="4">
    <source>
        <dbReference type="SAM" id="MobiDB-lite"/>
    </source>
</evidence>
<evidence type="ECO:0000305" key="5"/>
<evidence type="ECO:0007744" key="6">
    <source>
    </source>
</evidence>
<evidence type="ECO:0007744" key="7">
    <source>
    </source>
</evidence>
<comment type="function">
    <text>Transcriptional repressor. Binds to CArG box motifs, single-stranded and double-stranded DNA, and RNA. It may be that repression by CBF-A is a result of competitive binding of CBF, a putative positive factor, and CBF-A to the same or overlapping motifs around the CArG boxes.</text>
</comment>
<comment type="subunit">
    <text evidence="1">Identified in a IGF2BP1-dependent mRNP granule complex containing untranslated mRNAs. Interacts with APOBEC1 (By similarity).</text>
</comment>
<comment type="subcellular location">
    <subcellularLocation>
        <location evidence="5">Nucleus</location>
    </subcellularLocation>
    <subcellularLocation>
        <location evidence="1">Cytoplasm</location>
    </subcellularLocation>
    <text evidence="1">Localized in cytoplasmic mRNP granules containing untranslated mRNAs.</text>
</comment>
<comment type="tissue specificity">
    <text>Ubiquitous.</text>
</comment>
<gene>
    <name type="primary">Hnrnpab</name>
    <name type="synonym">Cbf-a</name>
    <name type="synonym">Cgbfa</name>
    <name type="synonym">Hnrpab</name>
</gene>
<dbReference type="EMBL" id="D90151">
    <property type="protein sequence ID" value="BAA14181.1"/>
    <property type="molecule type" value="mRNA"/>
</dbReference>
<dbReference type="EMBL" id="L36663">
    <property type="protein sequence ID" value="AAA92146.1"/>
    <property type="molecule type" value="mRNA"/>
</dbReference>
<dbReference type="EMBL" id="AK076132">
    <property type="protein sequence ID" value="BAC36208.1"/>
    <property type="molecule type" value="mRNA"/>
</dbReference>
<dbReference type="CCDS" id="CCDS24654.1"/>
<dbReference type="PIR" id="JQ0448">
    <property type="entry name" value="JQ0448"/>
</dbReference>
<dbReference type="RefSeq" id="NP_034578.1">
    <property type="nucleotide sequence ID" value="NM_010448.3"/>
</dbReference>
<dbReference type="SMR" id="Q99020"/>
<dbReference type="BioGRID" id="200358">
    <property type="interactions" value="52"/>
</dbReference>
<dbReference type="ComplexPortal" id="CPX-1098">
    <property type="entry name" value="C-to-U editosome complex"/>
</dbReference>
<dbReference type="CORUM" id="Q99020"/>
<dbReference type="DIP" id="DIP-31415N"/>
<dbReference type="FunCoup" id="Q99020">
    <property type="interactions" value="2417"/>
</dbReference>
<dbReference type="IntAct" id="Q99020">
    <property type="interactions" value="9"/>
</dbReference>
<dbReference type="MINT" id="Q99020"/>
<dbReference type="STRING" id="10090.ENSMUSP00000104731"/>
<dbReference type="GlyGen" id="Q99020">
    <property type="glycosylation" value="1 site, 1 O-linked glycan (1 site)"/>
</dbReference>
<dbReference type="iPTMnet" id="Q99020"/>
<dbReference type="PhosphoSitePlus" id="Q99020"/>
<dbReference type="SwissPalm" id="Q99020"/>
<dbReference type="jPOST" id="Q99020"/>
<dbReference type="ProteomicsDB" id="300432"/>
<dbReference type="Pumba" id="Q99020"/>
<dbReference type="Antibodypedia" id="17556">
    <property type="antibodies" value="148 antibodies from 23 providers"/>
</dbReference>
<dbReference type="DNASU" id="15384"/>
<dbReference type="Ensembl" id="ENSMUST00000074669.10">
    <property type="protein sequence ID" value="ENSMUSP00000074238.4"/>
    <property type="gene ID" value="ENSMUSG00000020358.18"/>
</dbReference>
<dbReference type="GeneID" id="15384"/>
<dbReference type="KEGG" id="mmu:15384"/>
<dbReference type="UCSC" id="uc007iua.1">
    <property type="organism name" value="mouse"/>
</dbReference>
<dbReference type="AGR" id="MGI:1330294"/>
<dbReference type="CTD" id="3182"/>
<dbReference type="MGI" id="MGI:1330294">
    <property type="gene designation" value="Hnrnpab"/>
</dbReference>
<dbReference type="VEuPathDB" id="HostDB:ENSMUSG00000020358"/>
<dbReference type="GeneTree" id="ENSGT00940000154735"/>
<dbReference type="InParanoid" id="Q99020"/>
<dbReference type="OrthoDB" id="1875751at2759"/>
<dbReference type="BioGRID-ORCS" id="15384">
    <property type="hits" value="15 hits in 83 CRISPR screens"/>
</dbReference>
<dbReference type="CD-CODE" id="764D0258">
    <property type="entry name" value="Neuronal RNP granule"/>
</dbReference>
<dbReference type="ChiTaRS" id="Hnrnpab">
    <property type="organism name" value="mouse"/>
</dbReference>
<dbReference type="PRO" id="PR:Q99020"/>
<dbReference type="Proteomes" id="UP000000589">
    <property type="component" value="Chromosome 11"/>
</dbReference>
<dbReference type="RNAct" id="Q99020">
    <property type="molecule type" value="protein"/>
</dbReference>
<dbReference type="Bgee" id="ENSMUSG00000020358">
    <property type="expression patterns" value="Expressed in primitive streak and 263 other cell types or tissues"/>
</dbReference>
<dbReference type="ExpressionAtlas" id="Q99020">
    <property type="expression patterns" value="baseline and differential"/>
</dbReference>
<dbReference type="GO" id="GO:0005737">
    <property type="term" value="C:cytoplasm"/>
    <property type="evidence" value="ECO:0000314"/>
    <property type="project" value="HGNC-UCL"/>
</dbReference>
<dbReference type="GO" id="GO:0098978">
    <property type="term" value="C:glutamatergic synapse"/>
    <property type="evidence" value="ECO:0000314"/>
    <property type="project" value="SynGO"/>
</dbReference>
<dbReference type="GO" id="GO:0045293">
    <property type="term" value="C:mRNA editing complex"/>
    <property type="evidence" value="ECO:0000303"/>
    <property type="project" value="ComplexPortal"/>
</dbReference>
<dbReference type="GO" id="GO:0005634">
    <property type="term" value="C:nucleus"/>
    <property type="evidence" value="ECO:0000314"/>
    <property type="project" value="HGNC-UCL"/>
</dbReference>
<dbReference type="GO" id="GO:0098794">
    <property type="term" value="C:postsynapse"/>
    <property type="evidence" value="ECO:0000314"/>
    <property type="project" value="SynGO"/>
</dbReference>
<dbReference type="GO" id="GO:0099523">
    <property type="term" value="C:presynaptic cytosol"/>
    <property type="evidence" value="ECO:0000314"/>
    <property type="project" value="SynGO"/>
</dbReference>
<dbReference type="GO" id="GO:1990904">
    <property type="term" value="C:ribonucleoprotein complex"/>
    <property type="evidence" value="ECO:0000250"/>
    <property type="project" value="UniProtKB"/>
</dbReference>
<dbReference type="GO" id="GO:0090575">
    <property type="term" value="C:RNA polymerase II transcription regulator complex"/>
    <property type="evidence" value="ECO:0000314"/>
    <property type="project" value="BHF-UCL"/>
</dbReference>
<dbReference type="GO" id="GO:0003677">
    <property type="term" value="F:DNA binding"/>
    <property type="evidence" value="ECO:0007669"/>
    <property type="project" value="UniProtKB-KW"/>
</dbReference>
<dbReference type="GO" id="GO:0003723">
    <property type="term" value="F:RNA binding"/>
    <property type="evidence" value="ECO:0000353"/>
    <property type="project" value="MGI"/>
</dbReference>
<dbReference type="GO" id="GO:0141166">
    <property type="term" value="P:chromosomal 5-methylcytosine DNA demethylation pathway"/>
    <property type="evidence" value="ECO:0000303"/>
    <property type="project" value="ComplexPortal"/>
</dbReference>
<dbReference type="GO" id="GO:0001837">
    <property type="term" value="P:epithelial to mesenchymal transition"/>
    <property type="evidence" value="ECO:0000314"/>
    <property type="project" value="HGNC-UCL"/>
</dbReference>
<dbReference type="GO" id="GO:0016556">
    <property type="term" value="P:mRNA modification"/>
    <property type="evidence" value="ECO:0000266"/>
    <property type="project" value="ComplexPortal"/>
</dbReference>
<dbReference type="GO" id="GO:2000623">
    <property type="term" value="P:negative regulation of nuclear-transcribed mRNA catabolic process, nonsense-mediated decay"/>
    <property type="evidence" value="ECO:0000266"/>
    <property type="project" value="ComplexPortal"/>
</dbReference>
<dbReference type="GO" id="GO:0000122">
    <property type="term" value="P:negative regulation of transcription by RNA polymerase II"/>
    <property type="evidence" value="ECO:0000316"/>
    <property type="project" value="MGI"/>
</dbReference>
<dbReference type="GO" id="GO:0045893">
    <property type="term" value="P:positive regulation of DNA-templated transcription"/>
    <property type="evidence" value="ECO:0000314"/>
    <property type="project" value="HGNC-UCL"/>
</dbReference>
<dbReference type="CDD" id="cd12757">
    <property type="entry name" value="RRM1_hnRNPAB"/>
    <property type="match status" value="1"/>
</dbReference>
<dbReference type="FunFam" id="3.30.70.330:FF:000186">
    <property type="entry name" value="heterogeneous nuclear ribonucleoprotein A/B isoform X1"/>
    <property type="match status" value="1"/>
</dbReference>
<dbReference type="FunFam" id="3.30.70.330:FF:000030">
    <property type="entry name" value="Heterogeneous nuclear ribonucleoprotein d0 isoform"/>
    <property type="match status" value="1"/>
</dbReference>
<dbReference type="Gene3D" id="3.30.70.330">
    <property type="match status" value="2"/>
</dbReference>
<dbReference type="InterPro" id="IPR012956">
    <property type="entry name" value="CARG-binding_factor_N"/>
</dbReference>
<dbReference type="InterPro" id="IPR034846">
    <property type="entry name" value="hnRNPAB_RRM1"/>
</dbReference>
<dbReference type="InterPro" id="IPR012677">
    <property type="entry name" value="Nucleotide-bd_a/b_plait_sf"/>
</dbReference>
<dbReference type="InterPro" id="IPR035979">
    <property type="entry name" value="RBD_domain_sf"/>
</dbReference>
<dbReference type="InterPro" id="IPR000504">
    <property type="entry name" value="RRM_dom"/>
</dbReference>
<dbReference type="PANTHER" id="PTHR48033:SF1">
    <property type="entry name" value="HETEROGENEOUS NUCLEAR RIBONUCLEOPROTEIN A_B"/>
    <property type="match status" value="1"/>
</dbReference>
<dbReference type="PANTHER" id="PTHR48033">
    <property type="entry name" value="RNA-BINDING (RRM/RBD/RNP MOTIFS) FAMILY PROTEIN"/>
    <property type="match status" value="1"/>
</dbReference>
<dbReference type="Pfam" id="PF08143">
    <property type="entry name" value="CBFNT"/>
    <property type="match status" value="1"/>
</dbReference>
<dbReference type="Pfam" id="PF00076">
    <property type="entry name" value="RRM_1"/>
    <property type="match status" value="2"/>
</dbReference>
<dbReference type="SMART" id="SM00360">
    <property type="entry name" value="RRM"/>
    <property type="match status" value="2"/>
</dbReference>
<dbReference type="SUPFAM" id="SSF54928">
    <property type="entry name" value="RNA-binding domain, RBD"/>
    <property type="match status" value="2"/>
</dbReference>
<dbReference type="PROSITE" id="PS50102">
    <property type="entry name" value="RRM"/>
    <property type="match status" value="2"/>
</dbReference>
<proteinExistence type="evidence at protein level"/>
<keyword id="KW-0007">Acetylation</keyword>
<keyword id="KW-0963">Cytoplasm</keyword>
<keyword id="KW-0903">Direct protein sequencing</keyword>
<keyword id="KW-0238">DNA-binding</keyword>
<keyword id="KW-1017">Isopeptide bond</keyword>
<keyword id="KW-0488">Methylation</keyword>
<keyword id="KW-0539">Nucleus</keyword>
<keyword id="KW-0597">Phosphoprotein</keyword>
<keyword id="KW-1185">Reference proteome</keyword>
<keyword id="KW-0677">Repeat</keyword>
<keyword id="KW-0678">Repressor</keyword>
<keyword id="KW-0694">RNA-binding</keyword>
<keyword id="KW-0804">Transcription</keyword>
<keyword id="KW-0805">Transcription regulation</keyword>
<keyword id="KW-0832">Ubl conjugation</keyword>
<reference key="1">
    <citation type="journal article" date="1992" name="Gene">
        <title>A protein binding to CArG box motifs and to single-stranded DNA functions as a transcriptional repressor.</title>
        <authorList>
            <person name="Kamada S."/>
            <person name="Miwa T."/>
        </authorList>
    </citation>
    <scope>NUCLEOTIDE SEQUENCE [MRNA]</scope>
    <source>
        <tissue>Muscle</tissue>
    </source>
</reference>
<reference key="2">
    <citation type="journal article" date="2005" name="Science">
        <title>The transcriptional landscape of the mammalian genome.</title>
        <authorList>
            <person name="Carninci P."/>
            <person name="Kasukawa T."/>
            <person name="Katayama S."/>
            <person name="Gough J."/>
            <person name="Frith M.C."/>
            <person name="Maeda N."/>
            <person name="Oyama R."/>
            <person name="Ravasi T."/>
            <person name="Lenhard B."/>
            <person name="Wells C."/>
            <person name="Kodzius R."/>
            <person name="Shimokawa K."/>
            <person name="Bajic V.B."/>
            <person name="Brenner S.E."/>
            <person name="Batalov S."/>
            <person name="Forrest A.R."/>
            <person name="Zavolan M."/>
            <person name="Davis M.J."/>
            <person name="Wilming L.G."/>
            <person name="Aidinis V."/>
            <person name="Allen J.E."/>
            <person name="Ambesi-Impiombato A."/>
            <person name="Apweiler R."/>
            <person name="Aturaliya R.N."/>
            <person name="Bailey T.L."/>
            <person name="Bansal M."/>
            <person name="Baxter L."/>
            <person name="Beisel K.W."/>
            <person name="Bersano T."/>
            <person name="Bono H."/>
            <person name="Chalk A.M."/>
            <person name="Chiu K.P."/>
            <person name="Choudhary V."/>
            <person name="Christoffels A."/>
            <person name="Clutterbuck D.R."/>
            <person name="Crowe M.L."/>
            <person name="Dalla E."/>
            <person name="Dalrymple B.P."/>
            <person name="de Bono B."/>
            <person name="Della Gatta G."/>
            <person name="di Bernardo D."/>
            <person name="Down T."/>
            <person name="Engstrom P."/>
            <person name="Fagiolini M."/>
            <person name="Faulkner G."/>
            <person name="Fletcher C.F."/>
            <person name="Fukushima T."/>
            <person name="Furuno M."/>
            <person name="Futaki S."/>
            <person name="Gariboldi M."/>
            <person name="Georgii-Hemming P."/>
            <person name="Gingeras T.R."/>
            <person name="Gojobori T."/>
            <person name="Green R.E."/>
            <person name="Gustincich S."/>
            <person name="Harbers M."/>
            <person name="Hayashi Y."/>
            <person name="Hensch T.K."/>
            <person name="Hirokawa N."/>
            <person name="Hill D."/>
            <person name="Huminiecki L."/>
            <person name="Iacono M."/>
            <person name="Ikeo K."/>
            <person name="Iwama A."/>
            <person name="Ishikawa T."/>
            <person name="Jakt M."/>
            <person name="Kanapin A."/>
            <person name="Katoh M."/>
            <person name="Kawasawa Y."/>
            <person name="Kelso J."/>
            <person name="Kitamura H."/>
            <person name="Kitano H."/>
            <person name="Kollias G."/>
            <person name="Krishnan S.P."/>
            <person name="Kruger A."/>
            <person name="Kummerfeld S.K."/>
            <person name="Kurochkin I.V."/>
            <person name="Lareau L.F."/>
            <person name="Lazarevic D."/>
            <person name="Lipovich L."/>
            <person name="Liu J."/>
            <person name="Liuni S."/>
            <person name="McWilliam S."/>
            <person name="Madan Babu M."/>
            <person name="Madera M."/>
            <person name="Marchionni L."/>
            <person name="Matsuda H."/>
            <person name="Matsuzawa S."/>
            <person name="Miki H."/>
            <person name="Mignone F."/>
            <person name="Miyake S."/>
            <person name="Morris K."/>
            <person name="Mottagui-Tabar S."/>
            <person name="Mulder N."/>
            <person name="Nakano N."/>
            <person name="Nakauchi H."/>
            <person name="Ng P."/>
            <person name="Nilsson R."/>
            <person name="Nishiguchi S."/>
            <person name="Nishikawa S."/>
            <person name="Nori F."/>
            <person name="Ohara O."/>
            <person name="Okazaki Y."/>
            <person name="Orlando V."/>
            <person name="Pang K.C."/>
            <person name="Pavan W.J."/>
            <person name="Pavesi G."/>
            <person name="Pesole G."/>
            <person name="Petrovsky N."/>
            <person name="Piazza S."/>
            <person name="Reed J."/>
            <person name="Reid J.F."/>
            <person name="Ring B.Z."/>
            <person name="Ringwald M."/>
            <person name="Rost B."/>
            <person name="Ruan Y."/>
            <person name="Salzberg S.L."/>
            <person name="Sandelin A."/>
            <person name="Schneider C."/>
            <person name="Schoenbach C."/>
            <person name="Sekiguchi K."/>
            <person name="Semple C.A."/>
            <person name="Seno S."/>
            <person name="Sessa L."/>
            <person name="Sheng Y."/>
            <person name="Shibata Y."/>
            <person name="Shimada H."/>
            <person name="Shimada K."/>
            <person name="Silva D."/>
            <person name="Sinclair B."/>
            <person name="Sperling S."/>
            <person name="Stupka E."/>
            <person name="Sugiura K."/>
            <person name="Sultana R."/>
            <person name="Takenaka Y."/>
            <person name="Taki K."/>
            <person name="Tammoja K."/>
            <person name="Tan S.L."/>
            <person name="Tang S."/>
            <person name="Taylor M.S."/>
            <person name="Tegner J."/>
            <person name="Teichmann S.A."/>
            <person name="Ueda H.R."/>
            <person name="van Nimwegen E."/>
            <person name="Verardo R."/>
            <person name="Wei C.L."/>
            <person name="Yagi K."/>
            <person name="Yamanishi H."/>
            <person name="Zabarovsky E."/>
            <person name="Zhu S."/>
            <person name="Zimmer A."/>
            <person name="Hide W."/>
            <person name="Bult C."/>
            <person name="Grimmond S.M."/>
            <person name="Teasdale R.D."/>
            <person name="Liu E.T."/>
            <person name="Brusic V."/>
            <person name="Quackenbush J."/>
            <person name="Wahlestedt C."/>
            <person name="Mattick J.S."/>
            <person name="Hume D.A."/>
            <person name="Kai C."/>
            <person name="Sasaki D."/>
            <person name="Tomaru Y."/>
            <person name="Fukuda S."/>
            <person name="Kanamori-Katayama M."/>
            <person name="Suzuki M."/>
            <person name="Aoki J."/>
            <person name="Arakawa T."/>
            <person name="Iida J."/>
            <person name="Imamura K."/>
            <person name="Itoh M."/>
            <person name="Kato T."/>
            <person name="Kawaji H."/>
            <person name="Kawagashira N."/>
            <person name="Kawashima T."/>
            <person name="Kojima M."/>
            <person name="Kondo S."/>
            <person name="Konno H."/>
            <person name="Nakano K."/>
            <person name="Ninomiya N."/>
            <person name="Nishio T."/>
            <person name="Okada M."/>
            <person name="Plessy C."/>
            <person name="Shibata K."/>
            <person name="Shiraki T."/>
            <person name="Suzuki S."/>
            <person name="Tagami M."/>
            <person name="Waki K."/>
            <person name="Watahiki A."/>
            <person name="Okamura-Oho Y."/>
            <person name="Suzuki H."/>
            <person name="Kawai J."/>
            <person name="Hayashizaki Y."/>
        </authorList>
    </citation>
    <scope>NUCLEOTIDE SEQUENCE [LARGE SCALE MRNA]</scope>
    <source>
        <strain>C57BL/6J</strain>
    </source>
</reference>
<reference key="3">
    <citation type="submission" date="2009-01" db="UniProtKB">
        <authorList>
            <person name="Lubec G."/>
            <person name="Sunyer B."/>
            <person name="Chen W.-Q."/>
        </authorList>
    </citation>
    <scope>PROTEIN SEQUENCE OF 117-124; 161-174; 177-195 AND 201-208</scope>
    <scope>IDENTIFICATION BY MASS SPECTROMETRY</scope>
    <source>
        <strain>OF1</strain>
        <tissue>Hippocampus</tissue>
    </source>
</reference>
<reference key="4">
    <citation type="journal article" date="2010" name="Cell">
        <title>A tissue-specific atlas of mouse protein phosphorylation and expression.</title>
        <authorList>
            <person name="Huttlin E.L."/>
            <person name="Jedrychowski M.P."/>
            <person name="Elias J.E."/>
            <person name="Goswami T."/>
            <person name="Rad R."/>
            <person name="Beausoleil S.A."/>
            <person name="Villen J."/>
            <person name="Haas W."/>
            <person name="Sowa M.E."/>
            <person name="Gygi S.P."/>
        </authorList>
    </citation>
    <scope>IDENTIFICATION BY MASS SPECTROMETRY [LARGE SCALE ANALYSIS]</scope>
    <source>
        <tissue>Brain</tissue>
        <tissue>Brown adipose tissue</tissue>
        <tissue>Heart</tissue>
        <tissue>Kidney</tissue>
        <tissue>Liver</tissue>
        <tissue>Lung</tissue>
        <tissue>Pancreas</tissue>
        <tissue>Spleen</tissue>
        <tissue>Testis</tissue>
    </source>
</reference>
<reference key="5">
    <citation type="journal article" date="2013" name="Mol. Cell">
        <title>SIRT5-mediated lysine desuccinylation impacts diverse metabolic pathways.</title>
        <authorList>
            <person name="Park J."/>
            <person name="Chen Y."/>
            <person name="Tishkoff D.X."/>
            <person name="Peng C."/>
            <person name="Tan M."/>
            <person name="Dai L."/>
            <person name="Xie Z."/>
            <person name="Zhang Y."/>
            <person name="Zwaans B.M."/>
            <person name="Skinner M.E."/>
            <person name="Lombard D.B."/>
            <person name="Zhao Y."/>
        </authorList>
    </citation>
    <scope>ACETYLATION [LARGE SCALE ANALYSIS] AT LYS-220 AND LYS-271</scope>
    <scope>IDENTIFICATION BY MASS SPECTROMETRY [LARGE SCALE ANALYSIS]</scope>
    <source>
        <tissue>Embryonic fibroblast</tissue>
    </source>
</reference>
<reference key="6">
    <citation type="journal article" date="2014" name="Mol. Cell. Proteomics">
        <title>Immunoaffinity enrichment and mass spectrometry analysis of protein methylation.</title>
        <authorList>
            <person name="Guo A."/>
            <person name="Gu H."/>
            <person name="Zhou J."/>
            <person name="Mulhern D."/>
            <person name="Wang Y."/>
            <person name="Lee K.A."/>
            <person name="Yang V."/>
            <person name="Aguiar M."/>
            <person name="Kornhauser J."/>
            <person name="Jia X."/>
            <person name="Ren J."/>
            <person name="Beausoleil S.A."/>
            <person name="Silva J.C."/>
            <person name="Vemulapalli V."/>
            <person name="Bedford M.T."/>
            <person name="Comb M.J."/>
        </authorList>
    </citation>
    <scope>METHYLATION [LARGE SCALE ANALYSIS] AT ARG-250; ARG-255; ARG-258 AND ARG-275</scope>
    <scope>IDENTIFICATION BY MASS SPECTROMETRY [LARGE SCALE ANALYSIS]</scope>
    <source>
        <tissue>Brain</tissue>
        <tissue>Embryo</tissue>
    </source>
</reference>
<organism>
    <name type="scientific">Mus musculus</name>
    <name type="common">Mouse</name>
    <dbReference type="NCBI Taxonomy" id="10090"/>
    <lineage>
        <taxon>Eukaryota</taxon>
        <taxon>Metazoa</taxon>
        <taxon>Chordata</taxon>
        <taxon>Craniata</taxon>
        <taxon>Vertebrata</taxon>
        <taxon>Euteleostomi</taxon>
        <taxon>Mammalia</taxon>
        <taxon>Eutheria</taxon>
        <taxon>Euarchontoglires</taxon>
        <taxon>Glires</taxon>
        <taxon>Rodentia</taxon>
        <taxon>Myomorpha</taxon>
        <taxon>Muroidea</taxon>
        <taxon>Muridae</taxon>
        <taxon>Murinae</taxon>
        <taxon>Mus</taxon>
        <taxon>Mus</taxon>
    </lineage>
</organism>
<protein>
    <recommendedName>
        <fullName>Heterogeneous nuclear ribonucleoprotein A/B</fullName>
        <shortName>hnRNP A/B</shortName>
    </recommendedName>
    <alternativeName>
        <fullName>CArG-binding factor-A</fullName>
        <shortName>CBF-A</shortName>
    </alternativeName>
</protein>
<sequence length="285" mass="30831">MSDAAEEQPMETTGATENGHEAAPEGEAPVEPSAAAAAPAASAGSGGGTTTAPSGNQNGAEGDQINASKNEEDAGKMFVGGLSWDTSKKDLKDYFTKFGEVVDCTIKMDPNTGRSRGFGFILFKDSSSVEKVLDQKEHRLDGRVIDPKKAMAMKKDPVKKIFVGGLNPEATEEKIREYFGQFGEIEAIELPIDPKLNKRRGFVFITFKEEDPVKKVLEKKFHTVSGSKCEIKVAQPKEVYQQQQYGSGGRGNRNRGNRGSGGGQGSTNYGKSQRRGGHQNNYKPY</sequence>
<feature type="chain" id="PRO_0000081493" description="Heterogeneous nuclear ribonucleoprotein A/B">
    <location>
        <begin position="1"/>
        <end position="285"/>
    </location>
</feature>
<feature type="domain" description="RRM 1" evidence="3">
    <location>
        <begin position="75"/>
        <end position="158"/>
    </location>
</feature>
<feature type="domain" description="RRM 2" evidence="3">
    <location>
        <begin position="159"/>
        <end position="238"/>
    </location>
</feature>
<feature type="region of interest" description="Disordered" evidence="4">
    <location>
        <begin position="1"/>
        <end position="65"/>
    </location>
</feature>
<feature type="region of interest" description="Disordered" evidence="4">
    <location>
        <begin position="239"/>
        <end position="285"/>
    </location>
</feature>
<feature type="compositionally biased region" description="Low complexity" evidence="4">
    <location>
        <begin position="25"/>
        <end position="43"/>
    </location>
</feature>
<feature type="modified residue" description="Phosphoserine" evidence="2">
    <location>
        <position position="87"/>
    </location>
</feature>
<feature type="modified residue" description="N6-acetyllysine" evidence="6">
    <location>
        <position position="220"/>
    </location>
</feature>
<feature type="modified residue" description="Phosphoserine" evidence="2">
    <location>
        <position position="247"/>
    </location>
</feature>
<feature type="modified residue" description="Dimethylated arginine; alternate" evidence="2">
    <location>
        <position position="250"/>
    </location>
</feature>
<feature type="modified residue" description="Omega-N-methylarginine; alternate" evidence="7">
    <location>
        <position position="250"/>
    </location>
</feature>
<feature type="modified residue" description="Omega-N-methylarginine" evidence="7">
    <location>
        <position position="255"/>
    </location>
</feature>
<feature type="modified residue" description="Omega-N-methylarginine" evidence="7">
    <location>
        <position position="258"/>
    </location>
</feature>
<feature type="modified residue" description="N6-acetyllysine" evidence="6">
    <location>
        <position position="271"/>
    </location>
</feature>
<feature type="modified residue" description="Asymmetric dimethylarginine; alternate" evidence="7">
    <location>
        <position position="275"/>
    </location>
</feature>
<feature type="modified residue" description="Dimethylated arginine; alternate" evidence="2">
    <location>
        <position position="275"/>
    </location>
</feature>
<feature type="modified residue" description="Omega-N-methylarginine; alternate" evidence="7">
    <location>
        <position position="275"/>
    </location>
</feature>
<feature type="cross-link" description="Glycyl lysine isopeptide (Lys-Gly) (interchain with G-Cter in SUMO2)" evidence="2">
    <location>
        <position position="136"/>
    </location>
</feature>
<feature type="cross-link" description="Glycyl lysine isopeptide (Lys-Gly) (interchain with G-Cter in SUMO2)" evidence="2">
    <location>
        <position position="208"/>
    </location>
</feature>
<feature type="sequence conflict" description="In Ref. 2; BAC36208." evidence="5" ref="2">
    <original>G</original>
    <variation>S</variation>
    <location>
        <position position="26"/>
    </location>
</feature>
<feature type="sequence conflict" description="In Ref. 2; BAC36208." evidence="5" ref="2">
    <original>A</original>
    <variation>R</variation>
    <location>
        <position position="41"/>
    </location>
</feature>